<dbReference type="EC" id="2.4.2.18" evidence="1"/>
<dbReference type="EMBL" id="CP000444">
    <property type="protein sequence ID" value="ABI42524.1"/>
    <property type="molecule type" value="Genomic_DNA"/>
</dbReference>
<dbReference type="SMR" id="Q0HWI1"/>
<dbReference type="KEGG" id="shm:Shewmr7_1526"/>
<dbReference type="HOGENOM" id="CLU_034315_2_1_6"/>
<dbReference type="UniPathway" id="UPA00035">
    <property type="reaction ID" value="UER00041"/>
</dbReference>
<dbReference type="GO" id="GO:0005829">
    <property type="term" value="C:cytosol"/>
    <property type="evidence" value="ECO:0007669"/>
    <property type="project" value="TreeGrafter"/>
</dbReference>
<dbReference type="GO" id="GO:0004048">
    <property type="term" value="F:anthranilate phosphoribosyltransferase activity"/>
    <property type="evidence" value="ECO:0007669"/>
    <property type="project" value="UniProtKB-UniRule"/>
</dbReference>
<dbReference type="GO" id="GO:0000287">
    <property type="term" value="F:magnesium ion binding"/>
    <property type="evidence" value="ECO:0007669"/>
    <property type="project" value="UniProtKB-UniRule"/>
</dbReference>
<dbReference type="GO" id="GO:0000162">
    <property type="term" value="P:L-tryptophan biosynthetic process"/>
    <property type="evidence" value="ECO:0007669"/>
    <property type="project" value="UniProtKB-UniRule"/>
</dbReference>
<dbReference type="FunFam" id="3.40.1030.10:FF:000002">
    <property type="entry name" value="Anthranilate phosphoribosyltransferase"/>
    <property type="match status" value="1"/>
</dbReference>
<dbReference type="Gene3D" id="3.40.1030.10">
    <property type="entry name" value="Nucleoside phosphorylase/phosphoribosyltransferase catalytic domain"/>
    <property type="match status" value="1"/>
</dbReference>
<dbReference type="Gene3D" id="1.20.970.10">
    <property type="entry name" value="Transferase, Pyrimidine Nucleoside Phosphorylase, Chain C"/>
    <property type="match status" value="1"/>
</dbReference>
<dbReference type="HAMAP" id="MF_00211">
    <property type="entry name" value="TrpD"/>
    <property type="match status" value="1"/>
</dbReference>
<dbReference type="InterPro" id="IPR005940">
    <property type="entry name" value="Anthranilate_Pribosyl_Tfrase"/>
</dbReference>
<dbReference type="InterPro" id="IPR000312">
    <property type="entry name" value="Glycosyl_Trfase_fam3"/>
</dbReference>
<dbReference type="InterPro" id="IPR017459">
    <property type="entry name" value="Glycosyl_Trfase_fam3_N_dom"/>
</dbReference>
<dbReference type="InterPro" id="IPR036320">
    <property type="entry name" value="Glycosyl_Trfase_fam3_N_dom_sf"/>
</dbReference>
<dbReference type="InterPro" id="IPR035902">
    <property type="entry name" value="Nuc_phospho_transferase"/>
</dbReference>
<dbReference type="NCBIfam" id="TIGR01245">
    <property type="entry name" value="trpD"/>
    <property type="match status" value="1"/>
</dbReference>
<dbReference type="PANTHER" id="PTHR43285">
    <property type="entry name" value="ANTHRANILATE PHOSPHORIBOSYLTRANSFERASE"/>
    <property type="match status" value="1"/>
</dbReference>
<dbReference type="PANTHER" id="PTHR43285:SF2">
    <property type="entry name" value="ANTHRANILATE PHOSPHORIBOSYLTRANSFERASE"/>
    <property type="match status" value="1"/>
</dbReference>
<dbReference type="Pfam" id="PF02885">
    <property type="entry name" value="Glycos_trans_3N"/>
    <property type="match status" value="1"/>
</dbReference>
<dbReference type="Pfam" id="PF00591">
    <property type="entry name" value="Glycos_transf_3"/>
    <property type="match status" value="1"/>
</dbReference>
<dbReference type="SUPFAM" id="SSF52418">
    <property type="entry name" value="Nucleoside phosphorylase/phosphoribosyltransferase catalytic domain"/>
    <property type="match status" value="1"/>
</dbReference>
<dbReference type="SUPFAM" id="SSF47648">
    <property type="entry name" value="Nucleoside phosphorylase/phosphoribosyltransferase N-terminal domain"/>
    <property type="match status" value="1"/>
</dbReference>
<keyword id="KW-0028">Amino-acid biosynthesis</keyword>
<keyword id="KW-0057">Aromatic amino acid biosynthesis</keyword>
<keyword id="KW-0328">Glycosyltransferase</keyword>
<keyword id="KW-0460">Magnesium</keyword>
<keyword id="KW-0479">Metal-binding</keyword>
<keyword id="KW-0808">Transferase</keyword>
<keyword id="KW-0822">Tryptophan biosynthesis</keyword>
<protein>
    <recommendedName>
        <fullName evidence="1">Anthranilate phosphoribosyltransferase</fullName>
        <ecNumber evidence="1">2.4.2.18</ecNumber>
    </recommendedName>
</protein>
<reference key="1">
    <citation type="submission" date="2006-08" db="EMBL/GenBank/DDBJ databases">
        <title>Complete sequence of chromosome 1 of Shewanella sp. MR-7.</title>
        <authorList>
            <person name="Copeland A."/>
            <person name="Lucas S."/>
            <person name="Lapidus A."/>
            <person name="Barry K."/>
            <person name="Detter J.C."/>
            <person name="Glavina del Rio T."/>
            <person name="Hammon N."/>
            <person name="Israni S."/>
            <person name="Dalin E."/>
            <person name="Tice H."/>
            <person name="Pitluck S."/>
            <person name="Kiss H."/>
            <person name="Brettin T."/>
            <person name="Bruce D."/>
            <person name="Han C."/>
            <person name="Tapia R."/>
            <person name="Gilna P."/>
            <person name="Schmutz J."/>
            <person name="Larimer F."/>
            <person name="Land M."/>
            <person name="Hauser L."/>
            <person name="Kyrpides N."/>
            <person name="Mikhailova N."/>
            <person name="Nealson K."/>
            <person name="Konstantinidis K."/>
            <person name="Klappenbach J."/>
            <person name="Tiedje J."/>
            <person name="Richardson P."/>
        </authorList>
    </citation>
    <scope>NUCLEOTIDE SEQUENCE [LARGE SCALE GENOMIC DNA]</scope>
    <source>
        <strain>MR-7</strain>
    </source>
</reference>
<feature type="chain" id="PRO_1000043068" description="Anthranilate phosphoribosyltransferase">
    <location>
        <begin position="1"/>
        <end position="347"/>
    </location>
</feature>
<feature type="binding site" evidence="1">
    <location>
        <position position="88"/>
    </location>
    <ligand>
        <name>5-phospho-alpha-D-ribose 1-diphosphate</name>
        <dbReference type="ChEBI" id="CHEBI:58017"/>
    </ligand>
</feature>
<feature type="binding site" evidence="1">
    <location>
        <position position="88"/>
    </location>
    <ligand>
        <name>anthranilate</name>
        <dbReference type="ChEBI" id="CHEBI:16567"/>
        <label>1</label>
    </ligand>
</feature>
<feature type="binding site" evidence="1">
    <location>
        <begin position="91"/>
        <end position="92"/>
    </location>
    <ligand>
        <name>5-phospho-alpha-D-ribose 1-diphosphate</name>
        <dbReference type="ChEBI" id="CHEBI:58017"/>
    </ligand>
</feature>
<feature type="binding site" evidence="1">
    <location>
        <position position="96"/>
    </location>
    <ligand>
        <name>5-phospho-alpha-D-ribose 1-diphosphate</name>
        <dbReference type="ChEBI" id="CHEBI:58017"/>
    </ligand>
</feature>
<feature type="binding site" evidence="1">
    <location>
        <begin position="98"/>
        <end position="101"/>
    </location>
    <ligand>
        <name>5-phospho-alpha-D-ribose 1-diphosphate</name>
        <dbReference type="ChEBI" id="CHEBI:58017"/>
    </ligand>
</feature>
<feature type="binding site" evidence="1">
    <location>
        <position position="100"/>
    </location>
    <ligand>
        <name>Mg(2+)</name>
        <dbReference type="ChEBI" id="CHEBI:18420"/>
        <label>1</label>
    </ligand>
</feature>
<feature type="binding site" evidence="1">
    <location>
        <begin position="116"/>
        <end position="124"/>
    </location>
    <ligand>
        <name>5-phospho-alpha-D-ribose 1-diphosphate</name>
        <dbReference type="ChEBI" id="CHEBI:58017"/>
    </ligand>
</feature>
<feature type="binding site" evidence="1">
    <location>
        <position position="119"/>
    </location>
    <ligand>
        <name>anthranilate</name>
        <dbReference type="ChEBI" id="CHEBI:16567"/>
        <label>1</label>
    </ligand>
</feature>
<feature type="binding site" evidence="1">
    <location>
        <position position="128"/>
    </location>
    <ligand>
        <name>5-phospho-alpha-D-ribose 1-diphosphate</name>
        <dbReference type="ChEBI" id="CHEBI:58017"/>
    </ligand>
</feature>
<feature type="binding site" evidence="1">
    <location>
        <position position="174"/>
    </location>
    <ligand>
        <name>anthranilate</name>
        <dbReference type="ChEBI" id="CHEBI:16567"/>
        <label>2</label>
    </ligand>
</feature>
<feature type="binding site" evidence="1">
    <location>
        <position position="232"/>
    </location>
    <ligand>
        <name>Mg(2+)</name>
        <dbReference type="ChEBI" id="CHEBI:18420"/>
        <label>2</label>
    </ligand>
</feature>
<feature type="binding site" evidence="1">
    <location>
        <position position="233"/>
    </location>
    <ligand>
        <name>Mg(2+)</name>
        <dbReference type="ChEBI" id="CHEBI:18420"/>
        <label>1</label>
    </ligand>
</feature>
<feature type="binding site" evidence="1">
    <location>
        <position position="233"/>
    </location>
    <ligand>
        <name>Mg(2+)</name>
        <dbReference type="ChEBI" id="CHEBI:18420"/>
        <label>2</label>
    </ligand>
</feature>
<comment type="function">
    <text evidence="1">Catalyzes the transfer of the phosphoribosyl group of 5-phosphorylribose-1-pyrophosphate (PRPP) to anthranilate to yield N-(5'-phosphoribosyl)-anthranilate (PRA).</text>
</comment>
<comment type="catalytic activity">
    <reaction evidence="1">
        <text>N-(5-phospho-beta-D-ribosyl)anthranilate + diphosphate = 5-phospho-alpha-D-ribose 1-diphosphate + anthranilate</text>
        <dbReference type="Rhea" id="RHEA:11768"/>
        <dbReference type="ChEBI" id="CHEBI:16567"/>
        <dbReference type="ChEBI" id="CHEBI:18277"/>
        <dbReference type="ChEBI" id="CHEBI:33019"/>
        <dbReference type="ChEBI" id="CHEBI:58017"/>
        <dbReference type="EC" id="2.4.2.18"/>
    </reaction>
</comment>
<comment type="cofactor">
    <cofactor evidence="1">
        <name>Mg(2+)</name>
        <dbReference type="ChEBI" id="CHEBI:18420"/>
    </cofactor>
    <text evidence="1">Binds 2 magnesium ions per monomer.</text>
</comment>
<comment type="pathway">
    <text evidence="1">Amino-acid biosynthesis; L-tryptophan biosynthesis; L-tryptophan from chorismate: step 2/5.</text>
</comment>
<comment type="subunit">
    <text evidence="1">Homodimer.</text>
</comment>
<comment type="similarity">
    <text evidence="1">Belongs to the anthranilate phosphoribosyltransferase family.</text>
</comment>
<gene>
    <name evidence="1" type="primary">trpD</name>
    <name type="ordered locus">Shewmr7_1526</name>
</gene>
<evidence type="ECO:0000255" key="1">
    <source>
        <dbReference type="HAMAP-Rule" id="MF_00211"/>
    </source>
</evidence>
<sequence length="347" mass="36328">MSATSIQPLLDILFQGKALTREQTASLFSTLIQGEMNEAVMAGMLMALKIRGETIAEISGAADAMRAAAKPFPYPSSKRTEGIIDIVGTGGDGFNTINISTTAAFVAAAAGAKVAKHGNRSVSSKSGSSDLLAQFGIDLTMSPELASRCLESLNLCFLFAPHYHGGVKHAVPVRQALKTRTLFNVLGPLINPARPEFMLLGVYSPELVTPIARVLQALGTQRAMVVHGSGLDEVALHGSTQVAELKDGEIIEYQLTPADFGVPQAQISELEGGEPAQNAQITQSILQGQGSDAHTHAVAINAGCALYLCGLSDSVKAGTALALNTIKSGKAFELLNQLAKVSSETQE</sequence>
<proteinExistence type="inferred from homology"/>
<organism>
    <name type="scientific">Shewanella sp. (strain MR-7)</name>
    <dbReference type="NCBI Taxonomy" id="60481"/>
    <lineage>
        <taxon>Bacteria</taxon>
        <taxon>Pseudomonadati</taxon>
        <taxon>Pseudomonadota</taxon>
        <taxon>Gammaproteobacteria</taxon>
        <taxon>Alteromonadales</taxon>
        <taxon>Shewanellaceae</taxon>
        <taxon>Shewanella</taxon>
    </lineage>
</organism>
<name>TRPD_SHESR</name>
<accession>Q0HWI1</accession>